<reference key="1">
    <citation type="journal article" date="1999" name="J. Biol. Chem.">
        <title>sgk is an aldosterone-induced kinase in the renal collecting duct. Effects on epithelial Na+ channels.</title>
        <authorList>
            <person name="Naray-Fejes-Toth A."/>
            <person name="Canessa C."/>
            <person name="Cleaveland E.S."/>
            <person name="Aldrich G."/>
            <person name="Fejes-Toth G."/>
        </authorList>
    </citation>
    <scope>NUCLEOTIDE SEQUENCE [MRNA] (ISOFORM 1)</scope>
</reference>
<reference key="2">
    <citation type="journal article" date="2000" name="Am. J. Physiol.">
        <title>Regulation of sgk by aldosterone and its effects on the epithelial Na(+) channel.</title>
        <authorList>
            <person name="Shigaev A."/>
            <person name="Asher C."/>
            <person name="Latter H."/>
            <person name="Garty H."/>
            <person name="Reuveny E."/>
        </authorList>
    </citation>
    <scope>NUCLEOTIDE SEQUENCE [MRNA] (ISOFORM 1)</scope>
    <source>
        <strain>C57BL/6J</strain>
        <tissue>Placenta</tissue>
    </source>
</reference>
<reference key="3">
    <citation type="journal article" date="2005" name="Science">
        <title>The transcriptional landscape of the mammalian genome.</title>
        <authorList>
            <person name="Carninci P."/>
            <person name="Kasukawa T."/>
            <person name="Katayama S."/>
            <person name="Gough J."/>
            <person name="Frith M.C."/>
            <person name="Maeda N."/>
            <person name="Oyama R."/>
            <person name="Ravasi T."/>
            <person name="Lenhard B."/>
            <person name="Wells C."/>
            <person name="Kodzius R."/>
            <person name="Shimokawa K."/>
            <person name="Bajic V.B."/>
            <person name="Brenner S.E."/>
            <person name="Batalov S."/>
            <person name="Forrest A.R."/>
            <person name="Zavolan M."/>
            <person name="Davis M.J."/>
            <person name="Wilming L.G."/>
            <person name="Aidinis V."/>
            <person name="Allen J.E."/>
            <person name="Ambesi-Impiombato A."/>
            <person name="Apweiler R."/>
            <person name="Aturaliya R.N."/>
            <person name="Bailey T.L."/>
            <person name="Bansal M."/>
            <person name="Baxter L."/>
            <person name="Beisel K.W."/>
            <person name="Bersano T."/>
            <person name="Bono H."/>
            <person name="Chalk A.M."/>
            <person name="Chiu K.P."/>
            <person name="Choudhary V."/>
            <person name="Christoffels A."/>
            <person name="Clutterbuck D.R."/>
            <person name="Crowe M.L."/>
            <person name="Dalla E."/>
            <person name="Dalrymple B.P."/>
            <person name="de Bono B."/>
            <person name="Della Gatta G."/>
            <person name="di Bernardo D."/>
            <person name="Down T."/>
            <person name="Engstrom P."/>
            <person name="Fagiolini M."/>
            <person name="Faulkner G."/>
            <person name="Fletcher C.F."/>
            <person name="Fukushima T."/>
            <person name="Furuno M."/>
            <person name="Futaki S."/>
            <person name="Gariboldi M."/>
            <person name="Georgii-Hemming P."/>
            <person name="Gingeras T.R."/>
            <person name="Gojobori T."/>
            <person name="Green R.E."/>
            <person name="Gustincich S."/>
            <person name="Harbers M."/>
            <person name="Hayashi Y."/>
            <person name="Hensch T.K."/>
            <person name="Hirokawa N."/>
            <person name="Hill D."/>
            <person name="Huminiecki L."/>
            <person name="Iacono M."/>
            <person name="Ikeo K."/>
            <person name="Iwama A."/>
            <person name="Ishikawa T."/>
            <person name="Jakt M."/>
            <person name="Kanapin A."/>
            <person name="Katoh M."/>
            <person name="Kawasawa Y."/>
            <person name="Kelso J."/>
            <person name="Kitamura H."/>
            <person name="Kitano H."/>
            <person name="Kollias G."/>
            <person name="Krishnan S.P."/>
            <person name="Kruger A."/>
            <person name="Kummerfeld S.K."/>
            <person name="Kurochkin I.V."/>
            <person name="Lareau L.F."/>
            <person name="Lazarevic D."/>
            <person name="Lipovich L."/>
            <person name="Liu J."/>
            <person name="Liuni S."/>
            <person name="McWilliam S."/>
            <person name="Madan Babu M."/>
            <person name="Madera M."/>
            <person name="Marchionni L."/>
            <person name="Matsuda H."/>
            <person name="Matsuzawa S."/>
            <person name="Miki H."/>
            <person name="Mignone F."/>
            <person name="Miyake S."/>
            <person name="Morris K."/>
            <person name="Mottagui-Tabar S."/>
            <person name="Mulder N."/>
            <person name="Nakano N."/>
            <person name="Nakauchi H."/>
            <person name="Ng P."/>
            <person name="Nilsson R."/>
            <person name="Nishiguchi S."/>
            <person name="Nishikawa S."/>
            <person name="Nori F."/>
            <person name="Ohara O."/>
            <person name="Okazaki Y."/>
            <person name="Orlando V."/>
            <person name="Pang K.C."/>
            <person name="Pavan W.J."/>
            <person name="Pavesi G."/>
            <person name="Pesole G."/>
            <person name="Petrovsky N."/>
            <person name="Piazza S."/>
            <person name="Reed J."/>
            <person name="Reid J.F."/>
            <person name="Ring B.Z."/>
            <person name="Ringwald M."/>
            <person name="Rost B."/>
            <person name="Ruan Y."/>
            <person name="Salzberg S.L."/>
            <person name="Sandelin A."/>
            <person name="Schneider C."/>
            <person name="Schoenbach C."/>
            <person name="Sekiguchi K."/>
            <person name="Semple C.A."/>
            <person name="Seno S."/>
            <person name="Sessa L."/>
            <person name="Sheng Y."/>
            <person name="Shibata Y."/>
            <person name="Shimada H."/>
            <person name="Shimada K."/>
            <person name="Silva D."/>
            <person name="Sinclair B."/>
            <person name="Sperling S."/>
            <person name="Stupka E."/>
            <person name="Sugiura K."/>
            <person name="Sultana R."/>
            <person name="Takenaka Y."/>
            <person name="Taki K."/>
            <person name="Tammoja K."/>
            <person name="Tan S.L."/>
            <person name="Tang S."/>
            <person name="Taylor M.S."/>
            <person name="Tegner J."/>
            <person name="Teichmann S.A."/>
            <person name="Ueda H.R."/>
            <person name="van Nimwegen E."/>
            <person name="Verardo R."/>
            <person name="Wei C.L."/>
            <person name="Yagi K."/>
            <person name="Yamanishi H."/>
            <person name="Zabarovsky E."/>
            <person name="Zhu S."/>
            <person name="Zimmer A."/>
            <person name="Hide W."/>
            <person name="Bult C."/>
            <person name="Grimmond S.M."/>
            <person name="Teasdale R.D."/>
            <person name="Liu E.T."/>
            <person name="Brusic V."/>
            <person name="Quackenbush J."/>
            <person name="Wahlestedt C."/>
            <person name="Mattick J.S."/>
            <person name="Hume D.A."/>
            <person name="Kai C."/>
            <person name="Sasaki D."/>
            <person name="Tomaru Y."/>
            <person name="Fukuda S."/>
            <person name="Kanamori-Katayama M."/>
            <person name="Suzuki M."/>
            <person name="Aoki J."/>
            <person name="Arakawa T."/>
            <person name="Iida J."/>
            <person name="Imamura K."/>
            <person name="Itoh M."/>
            <person name="Kato T."/>
            <person name="Kawaji H."/>
            <person name="Kawagashira N."/>
            <person name="Kawashima T."/>
            <person name="Kojima M."/>
            <person name="Kondo S."/>
            <person name="Konno H."/>
            <person name="Nakano K."/>
            <person name="Ninomiya N."/>
            <person name="Nishio T."/>
            <person name="Okada M."/>
            <person name="Plessy C."/>
            <person name="Shibata K."/>
            <person name="Shiraki T."/>
            <person name="Suzuki S."/>
            <person name="Tagami M."/>
            <person name="Waki K."/>
            <person name="Watahiki A."/>
            <person name="Okamura-Oho Y."/>
            <person name="Suzuki H."/>
            <person name="Kawai J."/>
            <person name="Hayashizaki Y."/>
        </authorList>
    </citation>
    <scope>NUCLEOTIDE SEQUENCE [LARGE SCALE MRNA] (ISOFORM 3)</scope>
    <source>
        <strain>C57BL/6J</strain>
        <tissue>Brain</tissue>
        <tissue>Placenta</tissue>
    </source>
</reference>
<reference key="4">
    <citation type="submission" date="2005-09" db="EMBL/GenBank/DDBJ databases">
        <authorList>
            <person name="Mural R.J."/>
            <person name="Adams M.D."/>
            <person name="Myers E.W."/>
            <person name="Smith H.O."/>
            <person name="Venter J.C."/>
        </authorList>
    </citation>
    <scope>NUCLEOTIDE SEQUENCE [LARGE SCALE GENOMIC DNA]</scope>
</reference>
<reference key="5">
    <citation type="journal article" date="2004" name="Genome Res.">
        <title>The status, quality, and expansion of the NIH full-length cDNA project: the Mammalian Gene Collection (MGC).</title>
        <authorList>
            <consortium name="The MGC Project Team"/>
        </authorList>
    </citation>
    <scope>NUCLEOTIDE SEQUENCE [LARGE SCALE MRNA] (ISOFORMS 1 AND 2)</scope>
    <source>
        <strain>C57BL/6J</strain>
        <strain>FVB/N</strain>
        <tissue>Brain</tissue>
    </source>
</reference>
<reference key="6">
    <citation type="journal article" date="1996" name="J. Biol. Chem.">
        <title>p53 stimulates promoter activity of the sgk. serum/glucocorticoid-inducible serine/threonine protein kinase gene in rodent mammary epithelial cells.</title>
        <authorList>
            <person name="Maiyar A.C."/>
            <person name="Huang A.J."/>
            <person name="Phu P.T."/>
            <person name="Cha H.H."/>
            <person name="Firestone G.L."/>
        </authorList>
    </citation>
    <scope>REGULATION BY P53</scope>
    <source>
        <tissue>Mammary epithelium</tissue>
    </source>
</reference>
<reference key="7">
    <citation type="journal article" date="2003" name="J. Biol. Chem.">
        <title>Expression of the serum- and glucocorticoid-inducible protein kinase, Sgk, is a cell survival response to multiple types of environmental stress stimuli in mammary epithelial cells.</title>
        <authorList>
            <person name="Leong M.L.L."/>
            <person name="Maiyar A.C."/>
            <person name="Kim B."/>
            <person name="O'Keeffe B.A."/>
            <person name="Firestone G.L."/>
        </authorList>
    </citation>
    <scope>FUNCTION</scope>
</reference>
<reference key="8">
    <citation type="journal article" date="2003" name="J. Biol. Chem.">
        <title>Cell surface expression of the ROMK (Kir 1.1) channel is regulated by the aldosterone-induced kinase, SGK-1, and protein kinase A.</title>
        <authorList>
            <person name="Yoo D."/>
            <person name="Kim B.Y."/>
            <person name="Campo C."/>
            <person name="Nance L."/>
            <person name="King A."/>
            <person name="Maouyo D."/>
            <person name="Welling P.A."/>
        </authorList>
    </citation>
    <scope>FUNCTION IN PHOSPHORYLATION OF KCNJ1/ROMK1</scope>
</reference>
<reference key="9">
    <citation type="journal article" date="2005" name="J. Physiol. (Lond.)">
        <title>Glucocorticoid adrenal steroids and glucocorticoid-inducible kinase isoforms in the regulation of GluR6 expression.</title>
        <authorList>
            <person name="Strutz-Seebohm N."/>
            <person name="Seebohm G."/>
            <person name="Shumilina E."/>
            <person name="Mack A.F."/>
            <person name="Wagner H.J."/>
            <person name="Lampert A."/>
            <person name="Grahammer F."/>
            <person name="Henke G."/>
            <person name="Just L."/>
            <person name="Skutella T."/>
            <person name="Hollmann M."/>
            <person name="Lang F."/>
        </authorList>
    </citation>
    <scope>FUNCTION IN REGULATION OF GRIK2/GLUR6</scope>
</reference>
<reference key="10">
    <citation type="journal article" date="2009" name="J. Mol. Med.">
        <title>Sgk1 activates MDM2-dependent p53 degradation and affects cell proliferation, survival, and differentiation.</title>
        <authorList>
            <person name="Amato R."/>
            <person name="D'Antona L."/>
            <person name="Porciatti G."/>
            <person name="Agosti V."/>
            <person name="Menniti M."/>
            <person name="Rinaldo C."/>
            <person name="Costa N."/>
            <person name="Bellacchio E."/>
            <person name="Mattarocci S."/>
            <person name="Fuiano G."/>
            <person name="Soddu S."/>
            <person name="Paggi M.G."/>
            <person name="Lang F."/>
            <person name="Perrotti N."/>
        </authorList>
    </citation>
    <scope>FUNCTION IN PHOSPHORYLATION OF MDM2</scope>
</reference>
<reference key="11">
    <citation type="journal article" date="2010" name="Dev. Dyn.">
        <title>Serum and glucocorticoid-inducible kinase 1 (SGK1) is necessary for vascular remodeling during angiogenesis.</title>
        <authorList>
            <person name="Catela C."/>
            <person name="Kratsios P."/>
            <person name="Hede M."/>
            <person name="Lang F."/>
            <person name="Rosenthal N."/>
        </authorList>
    </citation>
    <scope>FUNCTION</scope>
</reference>
<reference key="12">
    <citation type="journal article" date="2010" name="J. Biol. Chem.">
        <title>Serum and glucocorticoid-induced kinase (SGK) 1 and the epithelial sodium channel are regulated by multiple with no lysine (WNK) family members.</title>
        <authorList>
            <person name="Heise C.J."/>
            <person name="Xu B.E."/>
            <person name="Deaton S.L."/>
            <person name="Cha S.K."/>
            <person name="Cheng C.J."/>
            <person name="Earnest S."/>
            <person name="Sengupta S."/>
            <person name="Juang Y.C."/>
            <person name="Stippec S."/>
            <person name="Xu Y."/>
            <person name="Zhao Y."/>
            <person name="Huang C.L."/>
            <person name="Cobb M.H."/>
        </authorList>
    </citation>
    <scope>ACTIVITY REGULATION</scope>
</reference>
<reference key="13">
    <citation type="journal article" date="2010" name="Mol. Endocrinol.">
        <title>Serum- and glucocorticoid-inducible kinase 1 (SGK1) regulates adipocyte differentiation via forkhead box O1.</title>
        <authorList>
            <person name="Di Pietro N."/>
            <person name="Panel V."/>
            <person name="Hayes S."/>
            <person name="Bagattin A."/>
            <person name="Meruvu S."/>
            <person name="Pandolfi A."/>
            <person name="Hugendubler L."/>
            <person name="Fejes-Toth G."/>
            <person name="Naray-Fejes-Toth A."/>
            <person name="Mueller E."/>
        </authorList>
    </citation>
    <scope>FUNCTION IN PHOSPHORYLATION OF FOXO1</scope>
</reference>
<reference key="14">
    <citation type="journal article" date="2011" name="FASEB J.">
        <title>Stimulation of Ca2+-channel Orai1/STIM1 by serum- and glucocorticoid-inducible kinase 1 (SGK1).</title>
        <authorList>
            <person name="Eylenstein A."/>
            <person name="Gehring E.M."/>
            <person name="Heise N."/>
            <person name="Shumilina E."/>
            <person name="Schmidt S."/>
            <person name="Szteyn K."/>
            <person name="Muenzer P."/>
            <person name="Nurbaeva M.K."/>
            <person name="Eichenmueller M."/>
            <person name="Tyan L."/>
            <person name="Regel I."/>
            <person name="Foeller M."/>
            <person name="Kuhl D."/>
            <person name="Soboloff J."/>
            <person name="Penner R."/>
            <person name="Lang F."/>
        </authorList>
    </citation>
    <scope>FUNCTION</scope>
</reference>
<reference key="15">
    <citation type="journal article" date="2011" name="J. Biol. Chem.">
        <title>mSIN1 protein mediates SGK1 protein interaction with mTORC2 protein complex and is required for selective activation of the epithelial sodium channel.</title>
        <authorList>
            <person name="Lu M."/>
            <person name="Wang J."/>
            <person name="Ives H.E."/>
            <person name="Pearce D."/>
        </authorList>
    </citation>
    <scope>FUNCTION</scope>
    <scope>INTERACTION WITH MAPKAP1/SIN1</scope>
</reference>
<reference key="16">
    <citation type="journal article" date="2011" name="J. Cell Sci.">
        <title>Serum- and glucocorticoid-inducible kinase 1 (SGK1) controls Notch1 signaling by downregulation of protein stability through Fbw7 ubiquitin ligase.</title>
        <authorList>
            <person name="Mo J.S."/>
            <person name="Ann E.J."/>
            <person name="Yoon J.H."/>
            <person name="Jung J."/>
            <person name="Choi Y.H."/>
            <person name="Kim H.Y."/>
            <person name="Ahn J.S."/>
            <person name="Kim S.M."/>
            <person name="Kim M.Y."/>
            <person name="Hong J.A."/>
            <person name="Seo M.S."/>
            <person name="Lang F."/>
            <person name="Choi E.J."/>
            <person name="Park H.S."/>
        </authorList>
    </citation>
    <scope>FUNCTION IN PHOSPHORYLATION OF FBXW7</scope>
    <scope>INTERACTION WITH NOTCH1 AND FBXW7</scope>
</reference>
<reference key="17">
    <citation type="journal article" date="2011" name="Mol. Biol. Cell">
        <title>Serum- and glucocorticoid-induced kinase 3 in recycling endosomes mediates acute activation of Na+/H+ exchanger NHE3 by glucocorticoids.</title>
        <authorList>
            <person name="He P."/>
            <person name="Lee S.J."/>
            <person name="Lin S."/>
            <person name="Seidler U."/>
            <person name="Lang F."/>
            <person name="Fejes-Toth G."/>
            <person name="Naray-Fejes-Toth A."/>
            <person name="Yun C.C."/>
        </authorList>
    </citation>
    <scope>FUNCTION IN REGULATION OF SLC9A3/NHE3</scope>
    <scope>SUBCELLULAR LOCATION</scope>
</reference>
<proteinExistence type="evidence at protein level"/>
<organism>
    <name type="scientific">Mus musculus</name>
    <name type="common">Mouse</name>
    <dbReference type="NCBI Taxonomy" id="10090"/>
    <lineage>
        <taxon>Eukaryota</taxon>
        <taxon>Metazoa</taxon>
        <taxon>Chordata</taxon>
        <taxon>Craniata</taxon>
        <taxon>Vertebrata</taxon>
        <taxon>Euteleostomi</taxon>
        <taxon>Mammalia</taxon>
        <taxon>Eutheria</taxon>
        <taxon>Euarchontoglires</taxon>
        <taxon>Glires</taxon>
        <taxon>Rodentia</taxon>
        <taxon>Myomorpha</taxon>
        <taxon>Muroidea</taxon>
        <taxon>Muridae</taxon>
        <taxon>Murinae</taxon>
        <taxon>Mus</taxon>
        <taxon>Mus</taxon>
    </lineage>
</organism>
<feature type="chain" id="PRO_0000086643" description="Serine/threonine-protein kinase Sgk1">
    <location>
        <begin position="1"/>
        <end position="431"/>
    </location>
</feature>
<feature type="domain" description="Protein kinase" evidence="3">
    <location>
        <begin position="98"/>
        <end position="355"/>
    </location>
</feature>
<feature type="domain" description="AGC-kinase C-terminal" evidence="4">
    <location>
        <begin position="356"/>
        <end position="431"/>
    </location>
</feature>
<feature type="region of interest" description="Necessary for localization to the mitochondria" evidence="1">
    <location>
        <begin position="1"/>
        <end position="60"/>
    </location>
</feature>
<feature type="region of interest" description="Disordered" evidence="6">
    <location>
        <begin position="65"/>
        <end position="92"/>
    </location>
</feature>
<feature type="short sequence motif" description="Nuclear localization signal" evidence="1">
    <location>
        <begin position="131"/>
        <end position="141"/>
    </location>
</feature>
<feature type="compositionally biased region" description="Polar residues" evidence="6">
    <location>
        <begin position="81"/>
        <end position="91"/>
    </location>
</feature>
<feature type="active site" description="Proton acceptor" evidence="3 5">
    <location>
        <position position="222"/>
    </location>
</feature>
<feature type="binding site" evidence="3">
    <location>
        <begin position="104"/>
        <end position="112"/>
    </location>
    <ligand>
        <name>ATP</name>
        <dbReference type="ChEBI" id="CHEBI:30616"/>
    </ligand>
</feature>
<feature type="binding site" evidence="3">
    <location>
        <position position="127"/>
    </location>
    <ligand>
        <name>ATP</name>
        <dbReference type="ChEBI" id="CHEBI:30616"/>
    </ligand>
</feature>
<feature type="modified residue" description="Phosphoserine" evidence="2">
    <location>
        <position position="74"/>
    </location>
</feature>
<feature type="modified residue" description="Phosphoserine; by MAPK7" evidence="2">
    <location>
        <position position="78"/>
    </location>
</feature>
<feature type="modified residue" description="Phosphothreonine; by PDPK1" evidence="2">
    <location>
        <position position="256"/>
    </location>
</feature>
<feature type="modified residue" description="Phosphothreonine; by PKA" evidence="2">
    <location>
        <position position="369"/>
    </location>
</feature>
<feature type="modified residue" description="Phosphoserine" evidence="2">
    <location>
        <position position="397"/>
    </location>
</feature>
<feature type="modified residue" description="Phosphoserine" evidence="2">
    <location>
        <position position="401"/>
    </location>
</feature>
<feature type="modified residue" description="Phosphoserine" evidence="2">
    <location>
        <position position="422"/>
    </location>
</feature>
<feature type="disulfide bond" description="Interchain (with C-258)" evidence="2">
    <location>
        <position position="193"/>
    </location>
</feature>
<feature type="disulfide bond" description="Interchain (with C-193)" evidence="2">
    <location>
        <position position="258"/>
    </location>
</feature>
<feature type="splice variant" id="VSP_037788" description="In isoform 2." evidence="18">
    <original>MTVKAEAARSTLTYSRMRGMVAILI</original>
    <variation>MVNKDMNGFPVKKCSAFQFFKKRVRRWIKSPMVSVDKHQSPNLKYTGPAGVHLPPGESDFEAMCQSCLGDHAFQRGMLPPEESCSWEIQPGCEVKEQCNHANILTKPDPRTFWTNDDA</variation>
    <location>
        <begin position="1"/>
        <end position="25"/>
    </location>
</feature>
<feature type="splice variant" id="VSP_037789" description="In isoform 3." evidence="19">
    <original>MTVKAEAARSTLTYSRMRGMVAILI</original>
    <variation>MGEMQGALARARLESLLRPRHKKRAEAQKRSESVLLSGL</variation>
    <location>
        <begin position="1"/>
        <end position="25"/>
    </location>
</feature>
<feature type="sequence conflict" description="In Ref. 3; BAE26849." evidence="20" ref="3">
    <original>P</original>
    <variation>L</variation>
    <location>
        <position position="87"/>
    </location>
</feature>
<feature type="sequence conflict" description="In Ref. 3; BAE26849/BAE26871." evidence="20" ref="3">
    <original>M</original>
    <variation>V</variation>
    <location>
        <position position="347"/>
    </location>
</feature>
<accession>Q9WVC6</accession>
<accession>Q3TJN4</accession>
<accession>Q3UKD0</accession>
<accession>Q3UKF2</accession>
<accession>Q3V1V1</accession>
<accession>Q6NS85</accession>
<keyword id="KW-0025">Alternative splicing</keyword>
<keyword id="KW-0053">Apoptosis</keyword>
<keyword id="KW-0067">ATP-binding</keyword>
<keyword id="KW-1003">Cell membrane</keyword>
<keyword id="KW-0963">Cytoplasm</keyword>
<keyword id="KW-1015">Disulfide bond</keyword>
<keyword id="KW-0256">Endoplasmic reticulum</keyword>
<keyword id="KW-0418">Kinase</keyword>
<keyword id="KW-0472">Membrane</keyword>
<keyword id="KW-0496">Mitochondrion</keyword>
<keyword id="KW-0547">Nucleotide-binding</keyword>
<keyword id="KW-0539">Nucleus</keyword>
<keyword id="KW-0597">Phosphoprotein</keyword>
<keyword id="KW-1185">Reference proteome</keyword>
<keyword id="KW-0723">Serine/threonine-protein kinase</keyword>
<keyword id="KW-0346">Stress response</keyword>
<keyword id="KW-0808">Transferase</keyword>
<keyword id="KW-0832">Ubl conjugation</keyword>
<gene>
    <name type="primary">Sgk1</name>
    <name type="synonym">Sgk</name>
</gene>
<sequence length="431" mass="48928">MTVKAEAARSTLTYSRMRGMVAILIAFMKQRRMGLNDFIQKIASNTYACKHAEVQSILKMSHPQEPELMNANPSPPPSPSQQINLGPSSNPHAKPSDFHFLKVIGKGSFGKVLLARHKAEEVFYAVKVLQKKAILKKKEEKHIMSERNVLLKNVKHPFLVGLHFSFQTADKLYFVLDYINGGELFYHLQRERCFLEPRARFYAAEIASALGYLHSLNIVYRDLKPENILLDSQGHIVLTDFGLCKENIEHNGTTSTFCGTPEYLAPEVLHKQPYDRTVDWWCLGAVLYEMLYGLPPFYSRNTAEMYDNILNKPLQLKPNITNSARHLLEGLLQKDRTKRLGAKDDFMEIKSHIFFSLINWDDLINKKITPPFNPNVSGPSDLRHFDPEFTEEPVPSSIGRSPDSILVTASVKEAAEAFLGFSYAPPVDSFL</sequence>
<dbReference type="EC" id="2.7.11.1"/>
<dbReference type="EMBL" id="AF139638">
    <property type="protein sequence ID" value="AAD43302.1"/>
    <property type="molecule type" value="mRNA"/>
</dbReference>
<dbReference type="EMBL" id="AF205855">
    <property type="protein sequence ID" value="AAF19429.1"/>
    <property type="molecule type" value="mRNA"/>
</dbReference>
<dbReference type="EMBL" id="AK132234">
    <property type="protein sequence ID" value="BAE21048.1"/>
    <property type="molecule type" value="mRNA"/>
</dbReference>
<dbReference type="EMBL" id="AK146037">
    <property type="protein sequence ID" value="BAE26849.1"/>
    <property type="molecule type" value="mRNA"/>
</dbReference>
<dbReference type="EMBL" id="AK146062">
    <property type="protein sequence ID" value="BAE26871.1"/>
    <property type="molecule type" value="mRNA"/>
</dbReference>
<dbReference type="EMBL" id="AK159131">
    <property type="protein sequence ID" value="BAE34843.1"/>
    <property type="molecule type" value="mRNA"/>
</dbReference>
<dbReference type="EMBL" id="AK167364">
    <property type="protein sequence ID" value="BAE39461.1"/>
    <property type="molecule type" value="mRNA"/>
</dbReference>
<dbReference type="EMBL" id="CH466562">
    <property type="protein sequence ID" value="EDL03408.1"/>
    <property type="molecule type" value="Genomic_DNA"/>
</dbReference>
<dbReference type="EMBL" id="BC005720">
    <property type="protein sequence ID" value="AAH05720.1"/>
    <property type="molecule type" value="mRNA"/>
</dbReference>
<dbReference type="EMBL" id="BC070401">
    <property type="protein sequence ID" value="AAH70401.1"/>
    <property type="status" value="ALT_INIT"/>
    <property type="molecule type" value="mRNA"/>
</dbReference>
<dbReference type="CCDS" id="CCDS23726.1">
    <molecule id="Q9WVC6-1"/>
</dbReference>
<dbReference type="CCDS" id="CCDS48515.1">
    <molecule id="Q9WVC6-2"/>
</dbReference>
<dbReference type="CCDS" id="CCDS48517.1">
    <molecule id="Q9WVC6-3"/>
</dbReference>
<dbReference type="RefSeq" id="NP_001155317.2">
    <molecule id="Q9WVC6-2"/>
    <property type="nucleotide sequence ID" value="NM_001161845.2"/>
</dbReference>
<dbReference type="RefSeq" id="NP_001155319.1">
    <property type="nucleotide sequence ID" value="NM_001161847.2"/>
</dbReference>
<dbReference type="RefSeq" id="NP_001155320.1">
    <property type="nucleotide sequence ID" value="NM_001161848.2"/>
</dbReference>
<dbReference type="RefSeq" id="NP_001155321.1">
    <property type="nucleotide sequence ID" value="NM_001161849.2"/>
</dbReference>
<dbReference type="RefSeq" id="NP_001155322.1">
    <molecule id="Q9WVC6-3"/>
    <property type="nucleotide sequence ID" value="NM_001161850.2"/>
</dbReference>
<dbReference type="RefSeq" id="NP_035491.1">
    <molecule id="Q9WVC6-1"/>
    <property type="nucleotide sequence ID" value="NM_011361.3"/>
</dbReference>
<dbReference type="SMR" id="Q9WVC6"/>
<dbReference type="BioGRID" id="203197">
    <property type="interactions" value="7"/>
</dbReference>
<dbReference type="DIP" id="DIP-48845N"/>
<dbReference type="FunCoup" id="Q9WVC6">
    <property type="interactions" value="1537"/>
</dbReference>
<dbReference type="IntAct" id="Q9WVC6">
    <property type="interactions" value="5"/>
</dbReference>
<dbReference type="STRING" id="10090.ENSMUSP00000114074"/>
<dbReference type="BindingDB" id="Q9WVC6"/>
<dbReference type="ChEMBL" id="CHEMBL3988610"/>
<dbReference type="iPTMnet" id="Q9WVC6"/>
<dbReference type="PhosphoSitePlus" id="Q9WVC6"/>
<dbReference type="PaxDb" id="10090-ENSMUSP00000114074"/>
<dbReference type="ProteomicsDB" id="261009">
    <molecule id="Q9WVC6-1"/>
</dbReference>
<dbReference type="ProteomicsDB" id="261010">
    <molecule id="Q9WVC6-2"/>
</dbReference>
<dbReference type="ProteomicsDB" id="261011">
    <molecule id="Q9WVC6-3"/>
</dbReference>
<dbReference type="Antibodypedia" id="19734">
    <property type="antibodies" value="903 antibodies from 47 providers"/>
</dbReference>
<dbReference type="DNASU" id="20393"/>
<dbReference type="Ensembl" id="ENSMUST00000020145.12">
    <molecule id="Q9WVC6-1"/>
    <property type="protein sequence ID" value="ENSMUSP00000020145.6"/>
    <property type="gene ID" value="ENSMUSG00000019970.16"/>
</dbReference>
<dbReference type="Ensembl" id="ENSMUST00000092673.11">
    <molecule id="Q9WVC6-3"/>
    <property type="protein sequence ID" value="ENSMUSP00000090343.5"/>
    <property type="gene ID" value="ENSMUSG00000019970.16"/>
</dbReference>
<dbReference type="Ensembl" id="ENSMUST00000120509.8">
    <molecule id="Q9WVC6-2"/>
    <property type="protein sequence ID" value="ENSMUSP00000114074.2"/>
    <property type="gene ID" value="ENSMUSG00000019970.16"/>
</dbReference>
<dbReference type="GeneID" id="20393"/>
<dbReference type="KEGG" id="mmu:20393"/>
<dbReference type="UCSC" id="uc007eov.2">
    <molecule id="Q9WVC6-2"/>
    <property type="organism name" value="mouse"/>
</dbReference>
<dbReference type="UCSC" id="uc007eow.2">
    <molecule id="Q9WVC6-3"/>
    <property type="organism name" value="mouse"/>
</dbReference>
<dbReference type="UCSC" id="uc007eox.2">
    <molecule id="Q9WVC6-1"/>
    <property type="organism name" value="mouse"/>
</dbReference>
<dbReference type="AGR" id="MGI:1340062"/>
<dbReference type="CTD" id="6446"/>
<dbReference type="MGI" id="MGI:1340062">
    <property type="gene designation" value="Sgk1"/>
</dbReference>
<dbReference type="VEuPathDB" id="HostDB:ENSMUSG00000019970"/>
<dbReference type="eggNOG" id="KOG0598">
    <property type="taxonomic scope" value="Eukaryota"/>
</dbReference>
<dbReference type="GeneTree" id="ENSGT00940000155726"/>
<dbReference type="InParanoid" id="Q9WVC6"/>
<dbReference type="OMA" id="CVIYDMM"/>
<dbReference type="OrthoDB" id="12577at9989"/>
<dbReference type="PhylomeDB" id="Q9WVC6"/>
<dbReference type="TreeFam" id="TF320906"/>
<dbReference type="BRENDA" id="2.7.11.1">
    <property type="organism ID" value="3474"/>
</dbReference>
<dbReference type="Reactome" id="R-MMU-1257604">
    <property type="pathway name" value="PIP3 activates AKT signaling"/>
</dbReference>
<dbReference type="Reactome" id="R-MMU-2672351">
    <property type="pathway name" value="Stimuli-sensing channels"/>
</dbReference>
<dbReference type="Reactome" id="R-MMU-6804757">
    <property type="pathway name" value="Regulation of TP53 Degradation"/>
</dbReference>
<dbReference type="Reactome" id="R-MMU-9031628">
    <property type="pathway name" value="NGF-stimulated transcription"/>
</dbReference>
<dbReference type="BioGRID-ORCS" id="20393">
    <property type="hits" value="2 hits in 79 CRISPR screens"/>
</dbReference>
<dbReference type="ChiTaRS" id="Sgk1">
    <property type="organism name" value="mouse"/>
</dbReference>
<dbReference type="PRO" id="PR:Q9WVC6"/>
<dbReference type="Proteomes" id="UP000000589">
    <property type="component" value="Chromosome 10"/>
</dbReference>
<dbReference type="RNAct" id="Q9WVC6">
    <property type="molecule type" value="protein"/>
</dbReference>
<dbReference type="Bgee" id="ENSMUSG00000019970">
    <property type="expression patterns" value="Expressed in seminal vesicle and 298 other cell types or tissues"/>
</dbReference>
<dbReference type="ExpressionAtlas" id="Q9WVC6">
    <property type="expression patterns" value="baseline and differential"/>
</dbReference>
<dbReference type="GO" id="GO:0005829">
    <property type="term" value="C:cytosol"/>
    <property type="evidence" value="ECO:0000304"/>
    <property type="project" value="Reactome"/>
</dbReference>
<dbReference type="GO" id="GO:0005789">
    <property type="term" value="C:endoplasmic reticulum membrane"/>
    <property type="evidence" value="ECO:0007669"/>
    <property type="project" value="UniProtKB-SubCell"/>
</dbReference>
<dbReference type="GO" id="GO:0005739">
    <property type="term" value="C:mitochondrion"/>
    <property type="evidence" value="ECO:0007669"/>
    <property type="project" value="UniProtKB-SubCell"/>
</dbReference>
<dbReference type="GO" id="GO:0016607">
    <property type="term" value="C:nuclear speck"/>
    <property type="evidence" value="ECO:0007669"/>
    <property type="project" value="Ensembl"/>
</dbReference>
<dbReference type="GO" id="GO:0005886">
    <property type="term" value="C:plasma membrane"/>
    <property type="evidence" value="ECO:0007669"/>
    <property type="project" value="UniProtKB-SubCell"/>
</dbReference>
<dbReference type="GO" id="GO:0005524">
    <property type="term" value="F:ATP binding"/>
    <property type="evidence" value="ECO:0007669"/>
    <property type="project" value="UniProtKB-KW"/>
</dbReference>
<dbReference type="GO" id="GO:0004672">
    <property type="term" value="F:protein kinase activity"/>
    <property type="evidence" value="ECO:0000314"/>
    <property type="project" value="MGI"/>
</dbReference>
<dbReference type="GO" id="GO:0106310">
    <property type="term" value="F:protein serine kinase activity"/>
    <property type="evidence" value="ECO:0007669"/>
    <property type="project" value="RHEA"/>
</dbReference>
<dbReference type="GO" id="GO:0004674">
    <property type="term" value="F:protein serine/threonine kinase activity"/>
    <property type="evidence" value="ECO:0007669"/>
    <property type="project" value="UniProtKB-KW"/>
</dbReference>
<dbReference type="GO" id="GO:0004712">
    <property type="term" value="F:protein serine/threonine/tyrosine kinase activity"/>
    <property type="evidence" value="ECO:0000266"/>
    <property type="project" value="MGI"/>
</dbReference>
<dbReference type="GO" id="GO:0006915">
    <property type="term" value="P:apoptotic process"/>
    <property type="evidence" value="ECO:0007669"/>
    <property type="project" value="UniProtKB-KW"/>
</dbReference>
<dbReference type="GO" id="GO:1904045">
    <property type="term" value="P:cellular response to aldosterone"/>
    <property type="evidence" value="ECO:0000314"/>
    <property type="project" value="MGI"/>
</dbReference>
<dbReference type="GO" id="GO:0032869">
    <property type="term" value="P:cellular response to insulin stimulus"/>
    <property type="evidence" value="ECO:0000266"/>
    <property type="project" value="MGI"/>
</dbReference>
<dbReference type="GO" id="GO:0006974">
    <property type="term" value="P:DNA damage response"/>
    <property type="evidence" value="ECO:0000314"/>
    <property type="project" value="MGI"/>
</dbReference>
<dbReference type="GO" id="GO:0010765">
    <property type="term" value="P:positive regulation of sodium ion transport"/>
    <property type="evidence" value="ECO:0000266"/>
    <property type="project" value="MGI"/>
</dbReference>
<dbReference type="GO" id="GO:0032880">
    <property type="term" value="P:regulation of protein localization"/>
    <property type="evidence" value="ECO:0000266"/>
    <property type="project" value="MGI"/>
</dbReference>
<dbReference type="CDD" id="cd05575">
    <property type="entry name" value="STKc_SGK"/>
    <property type="match status" value="1"/>
</dbReference>
<dbReference type="FunFam" id="1.10.510.10:FF:000065">
    <property type="entry name" value="Non-specific serine/threonine protein kinase"/>
    <property type="match status" value="1"/>
</dbReference>
<dbReference type="FunFam" id="3.30.200.20:FF:000030">
    <property type="entry name" value="Non-specific serine/threonine protein kinase"/>
    <property type="match status" value="1"/>
</dbReference>
<dbReference type="Gene3D" id="3.30.200.20">
    <property type="entry name" value="Phosphorylase Kinase, domain 1"/>
    <property type="match status" value="1"/>
</dbReference>
<dbReference type="Gene3D" id="1.10.510.10">
    <property type="entry name" value="Transferase(Phosphotransferase) domain 1"/>
    <property type="match status" value="1"/>
</dbReference>
<dbReference type="InterPro" id="IPR000961">
    <property type="entry name" value="AGC-kinase_C"/>
</dbReference>
<dbReference type="InterPro" id="IPR011009">
    <property type="entry name" value="Kinase-like_dom_sf"/>
</dbReference>
<dbReference type="InterPro" id="IPR017892">
    <property type="entry name" value="Pkinase_C"/>
</dbReference>
<dbReference type="InterPro" id="IPR000719">
    <property type="entry name" value="Prot_kinase_dom"/>
</dbReference>
<dbReference type="InterPro" id="IPR017441">
    <property type="entry name" value="Protein_kinase_ATP_BS"/>
</dbReference>
<dbReference type="InterPro" id="IPR008271">
    <property type="entry name" value="Ser/Thr_kinase_AS"/>
</dbReference>
<dbReference type="PANTHER" id="PTHR24351">
    <property type="entry name" value="RIBOSOMAL PROTEIN S6 KINASE"/>
    <property type="match status" value="1"/>
</dbReference>
<dbReference type="Pfam" id="PF00069">
    <property type="entry name" value="Pkinase"/>
    <property type="match status" value="1"/>
</dbReference>
<dbReference type="Pfam" id="PF00433">
    <property type="entry name" value="Pkinase_C"/>
    <property type="match status" value="1"/>
</dbReference>
<dbReference type="SMART" id="SM00133">
    <property type="entry name" value="S_TK_X"/>
    <property type="match status" value="1"/>
</dbReference>
<dbReference type="SMART" id="SM00220">
    <property type="entry name" value="S_TKc"/>
    <property type="match status" value="1"/>
</dbReference>
<dbReference type="SUPFAM" id="SSF56112">
    <property type="entry name" value="Protein kinase-like (PK-like)"/>
    <property type="match status" value="1"/>
</dbReference>
<dbReference type="PROSITE" id="PS51285">
    <property type="entry name" value="AGC_KINASE_CTER"/>
    <property type="match status" value="1"/>
</dbReference>
<dbReference type="PROSITE" id="PS00107">
    <property type="entry name" value="PROTEIN_KINASE_ATP"/>
    <property type="match status" value="1"/>
</dbReference>
<dbReference type="PROSITE" id="PS50011">
    <property type="entry name" value="PROTEIN_KINASE_DOM"/>
    <property type="match status" value="1"/>
</dbReference>
<dbReference type="PROSITE" id="PS00108">
    <property type="entry name" value="PROTEIN_KINASE_ST"/>
    <property type="match status" value="1"/>
</dbReference>
<name>SGK1_MOUSE</name>
<evidence type="ECO:0000250" key="1"/>
<evidence type="ECO:0000250" key="2">
    <source>
        <dbReference type="UniProtKB" id="O00141"/>
    </source>
</evidence>
<evidence type="ECO:0000255" key="3">
    <source>
        <dbReference type="PROSITE-ProRule" id="PRU00159"/>
    </source>
</evidence>
<evidence type="ECO:0000255" key="4">
    <source>
        <dbReference type="PROSITE-ProRule" id="PRU00618"/>
    </source>
</evidence>
<evidence type="ECO:0000255" key="5">
    <source>
        <dbReference type="PROSITE-ProRule" id="PRU10027"/>
    </source>
</evidence>
<evidence type="ECO:0000256" key="6">
    <source>
        <dbReference type="SAM" id="MobiDB-lite"/>
    </source>
</evidence>
<evidence type="ECO:0000269" key="7">
    <source>
    </source>
</evidence>
<evidence type="ECO:0000269" key="8">
    <source>
    </source>
</evidence>
<evidence type="ECO:0000269" key="9">
    <source>
    </source>
</evidence>
<evidence type="ECO:0000269" key="10">
    <source>
    </source>
</evidence>
<evidence type="ECO:0000269" key="11">
    <source>
    </source>
</evidence>
<evidence type="ECO:0000269" key="12">
    <source>
    </source>
</evidence>
<evidence type="ECO:0000269" key="13">
    <source>
    </source>
</evidence>
<evidence type="ECO:0000269" key="14">
    <source>
    </source>
</evidence>
<evidence type="ECO:0000269" key="15">
    <source>
    </source>
</evidence>
<evidence type="ECO:0000269" key="16">
    <source>
    </source>
</evidence>
<evidence type="ECO:0000269" key="17">
    <source>
    </source>
</evidence>
<evidence type="ECO:0000303" key="18">
    <source>
    </source>
</evidence>
<evidence type="ECO:0000303" key="19">
    <source>
    </source>
</evidence>
<evidence type="ECO:0000305" key="20"/>
<comment type="function">
    <text evidence="7 8 9 10 11 13 14 15 16 17">Serine/threonine-protein kinase which is involved in the regulation of a wide variety of ion channels, membrane transporters, cellular enzymes, transcription factors, neuronal excitability, cell growth, proliferation, survival, migration and apoptosis. Plays an important role in cellular stress response. Contributes to regulation of renal Na(+) retention, renal K(+) elimination, salt appetite, gastric acid secretion, intestinal Na(+)/H(+) exchange and nutrient transport, insulin-dependent salt sensitivity of blood pressure, salt sensitivity of peripheral glucose uptake, cardiac repolarization and memory consolidation. Up-regulates Na(+) channels: SCNN1A/ENAC, SCN5A and ASIC1/ACCN2, K(+) channels: KCNJ1/ROMK1, KCNA1-5, KCNQ1-5 and KCNE1, epithelial Ca(2+) channels: TRPV5 and TRPV6, chloride channels: BSND, CLCN2 and CFTR, glutamate transporters: SLC1A3/EAAT1, SLC1A2 /EAAT2, SLC1A1/EAAT3, SLC1A6/EAAT4 and SLC1A7/EAAT5, amino acid transporters: SLC1A5/ASCT2, SLC38A1/SN1 and SLC6A19, creatine transporter: SLC6A8, Na(+)/dicarboxylate cotransporter: SLC13A2/NADC1, Na(+)-dependent phosphate cotransporter: SLC34A2/NAPI-2B, glutamate receptor: GRIK2/GLUR6. Up-regulates carriers: SLC9A3/NHE3, SLC12A1/NKCC2, SLC12A3/NCC, SLC5A3/SMIT, SLC2A1/GLUT1, SLC5A1/SGLT1 and SLC15A2/PEPT2. Regulates enzymes: GSK3A/B, PMM2 and Na(+)/K(+) ATPase, and transcription factors: CTNNB1 and nuclear factor NF-kappa-B. Stimulates sodium transport into epithelial cells by enhancing the stability and expression of SCNN1A/ENAC. This is achieved by phosphorylating the NEDD4L ubiquitin E3 ligase, promoting its interaction with 14-3-3 proteins, thereby preventing it from binding to SCNN1A/ENAC and targeting it for degradation. Regulates store-operated Ca(+2) entry (SOCE) by stimulating ORAI1 and STIM1. Regulates KCNJ1/ROMK1 directly via its phosphorylation or indirectly via increased interaction with SLC9A3R2/NHERF2. Phosphorylates MDM2 and activates MDM2-dependent ubiquitination of p53/TP53. Phosphorylates MAPT/TAU and mediates microtubule depolymerization and neurite formation in hippocampal neurons. Phosphorylates SLC2A4/GLUT4 and up-regulates its activity. Phosphorylates APBB1/FE65 and promotes its localization to the nucleus. Phosphorylates MAPK1/ERK2 and activates it by enhancing its interaction with MAP2K1/MEK1 and MAP2K2/MEK2. Phosphorylates FBXW7 and plays an inhibitory role in the NOTCH1 signaling. Phosphorylates FOXO1 resulting in its relocalization from the nucleus to the cytoplasm. Phosphorylates FOXO3, promoting its exit from the nucleus and interference with FOXO3-dependent transcription. Phosphorylates BRAF and MAP3K3/MEKK3 and inhibits their activity. Phosphorylates SLC9A3/NHE3 in response to dexamethasone, resulting in its activation and increased localization at the cell membrane. Phosphorylates CREB1. Necessary for vascular remodeling during angiogenesis.</text>
</comment>
<comment type="catalytic activity">
    <reaction>
        <text>L-seryl-[protein] + ATP = O-phospho-L-seryl-[protein] + ADP + H(+)</text>
        <dbReference type="Rhea" id="RHEA:17989"/>
        <dbReference type="Rhea" id="RHEA-COMP:9863"/>
        <dbReference type="Rhea" id="RHEA-COMP:11604"/>
        <dbReference type="ChEBI" id="CHEBI:15378"/>
        <dbReference type="ChEBI" id="CHEBI:29999"/>
        <dbReference type="ChEBI" id="CHEBI:30616"/>
        <dbReference type="ChEBI" id="CHEBI:83421"/>
        <dbReference type="ChEBI" id="CHEBI:456216"/>
        <dbReference type="EC" id="2.7.11.1"/>
    </reaction>
</comment>
<comment type="catalytic activity">
    <reaction>
        <text>L-threonyl-[protein] + ATP = O-phospho-L-threonyl-[protein] + ADP + H(+)</text>
        <dbReference type="Rhea" id="RHEA:46608"/>
        <dbReference type="Rhea" id="RHEA-COMP:11060"/>
        <dbReference type="Rhea" id="RHEA-COMP:11605"/>
        <dbReference type="ChEBI" id="CHEBI:15378"/>
        <dbReference type="ChEBI" id="CHEBI:30013"/>
        <dbReference type="ChEBI" id="CHEBI:30616"/>
        <dbReference type="ChEBI" id="CHEBI:61977"/>
        <dbReference type="ChEBI" id="CHEBI:456216"/>
        <dbReference type="EC" id="2.7.11.1"/>
    </reaction>
</comment>
<comment type="activity regulation">
    <text evidence="2 12">Two specific sites, one in the kinase domain (Thr-256) and the other in the C-terminal regulatory region (Ser-422), need to be phosphorylated for its full activation (By similarity). Phosphorylation at Ser-397 and Ser-401 are also essential for its activity (By similarity). Activated by WNK1, WNK2, WNK3 and WNK4; which promote phosphorylation by mTORC2 (PubMed:20525693).</text>
</comment>
<comment type="subunit">
    <text evidence="2 14 16">Homodimer; disulfide-linked. Interacts with MAPK3/ERK1, MAPK1/ERK2, MAP2K1/MEK1, MAP2K2/MEK2, NEDD4, NEDD4L, MAPT/TAU, MAPK7, CREB1, SLC9A3R2/NHERF2 and KCNJ1/ROMK1 (By similarity). Forms a trimeric complex with FBXW7 and NOTCH1 Associates with the mammalian target of rapamycin complex 2 (mTORC2) via an interaction with MAPKAP1/SIN1.</text>
</comment>
<comment type="interaction">
    <interactant intactId="EBI-15591730">
        <id>Q9WVC6</id>
    </interactant>
    <interactant intactId="EBI-397757">
        <id>Q99N57</id>
        <label>Raf1</label>
    </interactant>
    <organismsDiffer>false</organismsDiffer>
    <experiments>2</experiments>
</comment>
<comment type="interaction">
    <interactant intactId="EBI-15591730">
        <id>Q9WVC6</id>
    </interactant>
    <interactant intactId="EBI-15771036">
        <id>Q9Z2S7-3</id>
        <label>Tsc22d3</label>
    </interactant>
    <organismsDiffer>false</organismsDiffer>
    <experiments>2</experiments>
</comment>
<comment type="subcellular location">
    <subcellularLocation>
        <location evidence="1">Cytoplasm</location>
    </subcellularLocation>
    <subcellularLocation>
        <location evidence="1">Nucleus</location>
    </subcellularLocation>
    <subcellularLocation>
        <location evidence="1">Endoplasmic reticulum membrane</location>
    </subcellularLocation>
    <subcellularLocation>
        <location evidence="1">Cell membrane</location>
    </subcellularLocation>
    <subcellularLocation>
        <location evidence="1">Mitochondrion</location>
    </subcellularLocation>
    <text evidence="1">The subcellular localization is controlled by the cell cycle, as well as by exposure to specific hormones and environmental stress stimuli. In proliferating cells, it shuttles between the nucleus and cytoplasm in synchrony with the cell cycle, and in serum/growth factor-stimulated cells it resides in the nucleus. In contrast, after exposure to environmental stress or treatment with glucocorticoids, it is detected in the cytoplasm and with certain stress conditions is associated with the mitochondria. In osmoregulation through the epithelial sodium channel, it can be localized to the cytoplasmic surface of the cell membrane. Nuclear, upon phosphorylation (By similarity).</text>
</comment>
<comment type="alternative products">
    <event type="alternative splicing"/>
    <isoform>
        <id>Q9WVC6-1</id>
        <name>1</name>
        <sequence type="displayed"/>
    </isoform>
    <isoform>
        <id>Q9WVC6-2</id>
        <name>2</name>
        <sequence type="described" ref="VSP_037788"/>
    </isoform>
    <isoform>
        <id>Q9WVC6-3</id>
        <name>3</name>
        <sequence type="described" ref="VSP_037789"/>
    </isoform>
</comment>
<comment type="induction">
    <text>Up-regulated by tumor suppressor p53 in mammary epithelial tumor cells.</text>
</comment>
<comment type="PTM">
    <text evidence="1">Regulated by phosphorylation. Activated by phosphorylation on Ser-422 by mTORC2, transforming it into a substrate for PDPK1 which phosphorylates it on Thr-256. Phosphorylation on Ser-397 and Ser-401 are also essential for its activity. Phosphorylation on Ser-78 by MAPK7 is required for growth factor-induced cell cycle progression (By similarity).</text>
</comment>
<comment type="PTM">
    <text evidence="1">Ubiquitinated by NEDD4L; which promotes proteasomal degradation. Ubiquitinated by SYVN1 at the endoplasmic reticulum; which promotes rapid proteasomal degradation and maintains a high turnover rate in resting cells (By similarity).</text>
</comment>
<comment type="similarity">
    <text evidence="20">Belongs to the protein kinase superfamily. AGC Ser/Thr protein kinase family.</text>
</comment>
<comment type="sequence caution" evidence="20">
    <conflict type="erroneous initiation">
        <sequence resource="EMBL-CDS" id="AAH70401"/>
    </conflict>
</comment>
<protein>
    <recommendedName>
        <fullName>Serine/threonine-protein kinase Sgk1</fullName>
        <ecNumber>2.7.11.1</ecNumber>
    </recommendedName>
    <alternativeName>
        <fullName>Serum/glucocorticoid-regulated kinase 1</fullName>
    </alternativeName>
</protein>